<organism>
    <name type="scientific">Drosophila melanogaster</name>
    <name type="common">Fruit fly</name>
    <dbReference type="NCBI Taxonomy" id="7227"/>
    <lineage>
        <taxon>Eukaryota</taxon>
        <taxon>Metazoa</taxon>
        <taxon>Ecdysozoa</taxon>
        <taxon>Arthropoda</taxon>
        <taxon>Hexapoda</taxon>
        <taxon>Insecta</taxon>
        <taxon>Pterygota</taxon>
        <taxon>Neoptera</taxon>
        <taxon>Endopterygota</taxon>
        <taxon>Diptera</taxon>
        <taxon>Brachycera</taxon>
        <taxon>Muscomorpha</taxon>
        <taxon>Ephydroidea</taxon>
        <taxon>Drosophilidae</taxon>
        <taxon>Drosophila</taxon>
        <taxon>Sophophora</taxon>
    </lineage>
</organism>
<reference key="1">
    <citation type="journal article" date="1987" name="EMBO J.">
        <title>Developmental expression of a regulatory gene is programmed at the level of splicing.</title>
        <authorList>
            <person name="Chou T.-B."/>
            <person name="Zachar Z."/>
            <person name="Bingham P.M."/>
        </authorList>
    </citation>
    <scope>NUCLEOTIDE SEQUENCE [GENOMIC DNA] (ISOFORM A)</scope>
</reference>
<reference key="2">
    <citation type="journal article" date="2000" name="Science">
        <title>The genome sequence of Drosophila melanogaster.</title>
        <authorList>
            <person name="Adams M.D."/>
            <person name="Celniker S.E."/>
            <person name="Holt R.A."/>
            <person name="Evans C.A."/>
            <person name="Gocayne J.D."/>
            <person name="Amanatides P.G."/>
            <person name="Scherer S.E."/>
            <person name="Li P.W."/>
            <person name="Hoskins R.A."/>
            <person name="Galle R.F."/>
            <person name="George R.A."/>
            <person name="Lewis S.E."/>
            <person name="Richards S."/>
            <person name="Ashburner M."/>
            <person name="Henderson S.N."/>
            <person name="Sutton G.G."/>
            <person name="Wortman J.R."/>
            <person name="Yandell M.D."/>
            <person name="Zhang Q."/>
            <person name="Chen L.X."/>
            <person name="Brandon R.C."/>
            <person name="Rogers Y.-H.C."/>
            <person name="Blazej R.G."/>
            <person name="Champe M."/>
            <person name="Pfeiffer B.D."/>
            <person name="Wan K.H."/>
            <person name="Doyle C."/>
            <person name="Baxter E.G."/>
            <person name="Helt G."/>
            <person name="Nelson C.R."/>
            <person name="Miklos G.L.G."/>
            <person name="Abril J.F."/>
            <person name="Agbayani A."/>
            <person name="An H.-J."/>
            <person name="Andrews-Pfannkoch C."/>
            <person name="Baldwin D."/>
            <person name="Ballew R.M."/>
            <person name="Basu A."/>
            <person name="Baxendale J."/>
            <person name="Bayraktaroglu L."/>
            <person name="Beasley E.M."/>
            <person name="Beeson K.Y."/>
            <person name="Benos P.V."/>
            <person name="Berman B.P."/>
            <person name="Bhandari D."/>
            <person name="Bolshakov S."/>
            <person name="Borkova D."/>
            <person name="Botchan M.R."/>
            <person name="Bouck J."/>
            <person name="Brokstein P."/>
            <person name="Brottier P."/>
            <person name="Burtis K.C."/>
            <person name="Busam D.A."/>
            <person name="Butler H."/>
            <person name="Cadieu E."/>
            <person name="Center A."/>
            <person name="Chandra I."/>
            <person name="Cherry J.M."/>
            <person name="Cawley S."/>
            <person name="Dahlke C."/>
            <person name="Davenport L.B."/>
            <person name="Davies P."/>
            <person name="de Pablos B."/>
            <person name="Delcher A."/>
            <person name="Deng Z."/>
            <person name="Mays A.D."/>
            <person name="Dew I."/>
            <person name="Dietz S.M."/>
            <person name="Dodson K."/>
            <person name="Doup L.E."/>
            <person name="Downes M."/>
            <person name="Dugan-Rocha S."/>
            <person name="Dunkov B.C."/>
            <person name="Dunn P."/>
            <person name="Durbin K.J."/>
            <person name="Evangelista C.C."/>
            <person name="Ferraz C."/>
            <person name="Ferriera S."/>
            <person name="Fleischmann W."/>
            <person name="Fosler C."/>
            <person name="Gabrielian A.E."/>
            <person name="Garg N.S."/>
            <person name="Gelbart W.M."/>
            <person name="Glasser K."/>
            <person name="Glodek A."/>
            <person name="Gong F."/>
            <person name="Gorrell J.H."/>
            <person name="Gu Z."/>
            <person name="Guan P."/>
            <person name="Harris M."/>
            <person name="Harris N.L."/>
            <person name="Harvey D.A."/>
            <person name="Heiman T.J."/>
            <person name="Hernandez J.R."/>
            <person name="Houck J."/>
            <person name="Hostin D."/>
            <person name="Houston K.A."/>
            <person name="Howland T.J."/>
            <person name="Wei M.-H."/>
            <person name="Ibegwam C."/>
            <person name="Jalali M."/>
            <person name="Kalush F."/>
            <person name="Karpen G.H."/>
            <person name="Ke Z."/>
            <person name="Kennison J.A."/>
            <person name="Ketchum K.A."/>
            <person name="Kimmel B.E."/>
            <person name="Kodira C.D."/>
            <person name="Kraft C.L."/>
            <person name="Kravitz S."/>
            <person name="Kulp D."/>
            <person name="Lai Z."/>
            <person name="Lasko P."/>
            <person name="Lei Y."/>
            <person name="Levitsky A.A."/>
            <person name="Li J.H."/>
            <person name="Li Z."/>
            <person name="Liang Y."/>
            <person name="Lin X."/>
            <person name="Liu X."/>
            <person name="Mattei B."/>
            <person name="McIntosh T.C."/>
            <person name="McLeod M.P."/>
            <person name="McPherson D."/>
            <person name="Merkulov G."/>
            <person name="Milshina N.V."/>
            <person name="Mobarry C."/>
            <person name="Morris J."/>
            <person name="Moshrefi A."/>
            <person name="Mount S.M."/>
            <person name="Moy M."/>
            <person name="Murphy B."/>
            <person name="Murphy L."/>
            <person name="Muzny D.M."/>
            <person name="Nelson D.L."/>
            <person name="Nelson D.R."/>
            <person name="Nelson K.A."/>
            <person name="Nixon K."/>
            <person name="Nusskern D.R."/>
            <person name="Pacleb J.M."/>
            <person name="Palazzolo M."/>
            <person name="Pittman G.S."/>
            <person name="Pan S."/>
            <person name="Pollard J."/>
            <person name="Puri V."/>
            <person name="Reese M.G."/>
            <person name="Reinert K."/>
            <person name="Remington K."/>
            <person name="Saunders R.D.C."/>
            <person name="Scheeler F."/>
            <person name="Shen H."/>
            <person name="Shue B.C."/>
            <person name="Siden-Kiamos I."/>
            <person name="Simpson M."/>
            <person name="Skupski M.P."/>
            <person name="Smith T.J."/>
            <person name="Spier E."/>
            <person name="Spradling A.C."/>
            <person name="Stapleton M."/>
            <person name="Strong R."/>
            <person name="Sun E."/>
            <person name="Svirskas R."/>
            <person name="Tector C."/>
            <person name="Turner R."/>
            <person name="Venter E."/>
            <person name="Wang A.H."/>
            <person name="Wang X."/>
            <person name="Wang Z.-Y."/>
            <person name="Wassarman D.A."/>
            <person name="Weinstock G.M."/>
            <person name="Weissenbach J."/>
            <person name="Williams S.M."/>
            <person name="Woodage T."/>
            <person name="Worley K.C."/>
            <person name="Wu D."/>
            <person name="Yang S."/>
            <person name="Yao Q.A."/>
            <person name="Ye J."/>
            <person name="Yeh R.-F."/>
            <person name="Zaveri J.S."/>
            <person name="Zhan M."/>
            <person name="Zhang G."/>
            <person name="Zhao Q."/>
            <person name="Zheng L."/>
            <person name="Zheng X.H."/>
            <person name="Zhong F.N."/>
            <person name="Zhong W."/>
            <person name="Zhou X."/>
            <person name="Zhu S.C."/>
            <person name="Zhu X."/>
            <person name="Smith H.O."/>
            <person name="Gibbs R.A."/>
            <person name="Myers E.W."/>
            <person name="Rubin G.M."/>
            <person name="Venter J.C."/>
        </authorList>
    </citation>
    <scope>NUCLEOTIDE SEQUENCE [LARGE SCALE GENOMIC DNA]</scope>
    <source>
        <strain>Berkeley</strain>
    </source>
</reference>
<reference key="3">
    <citation type="journal article" date="2002" name="Genome Biol.">
        <title>Annotation of the Drosophila melanogaster euchromatic genome: a systematic review.</title>
        <authorList>
            <person name="Misra S."/>
            <person name="Crosby M.A."/>
            <person name="Mungall C.J."/>
            <person name="Matthews B.B."/>
            <person name="Campbell K.S."/>
            <person name="Hradecky P."/>
            <person name="Huang Y."/>
            <person name="Kaminker J.S."/>
            <person name="Millburn G.H."/>
            <person name="Prochnik S.E."/>
            <person name="Smith C.D."/>
            <person name="Tupy J.L."/>
            <person name="Whitfield E.J."/>
            <person name="Bayraktaroglu L."/>
            <person name="Berman B.P."/>
            <person name="Bettencourt B.R."/>
            <person name="Celniker S.E."/>
            <person name="de Grey A.D.N.J."/>
            <person name="Drysdale R.A."/>
            <person name="Harris N.L."/>
            <person name="Richter J."/>
            <person name="Russo S."/>
            <person name="Schroeder A.J."/>
            <person name="Shu S.Q."/>
            <person name="Stapleton M."/>
            <person name="Yamada C."/>
            <person name="Ashburner M."/>
            <person name="Gelbart W.M."/>
            <person name="Rubin G.M."/>
            <person name="Lewis S.E."/>
        </authorList>
    </citation>
    <scope>GENOME REANNOTATION</scope>
    <scope>ALTERNATIVE SPLICING</scope>
    <source>
        <strain>Berkeley</strain>
    </source>
</reference>
<reference key="4">
    <citation type="journal article" date="2000" name="Science">
        <title>From sequence to chromosome: the tip of the X chromosome of D. melanogaster.</title>
        <authorList>
            <person name="Benos P.V."/>
            <person name="Gatt M.K."/>
            <person name="Ashburner M."/>
            <person name="Murphy L."/>
            <person name="Harris D."/>
            <person name="Barrell B.G."/>
            <person name="Ferraz C."/>
            <person name="Vidal S."/>
            <person name="Brun C."/>
            <person name="Demailles J."/>
            <person name="Cadieu E."/>
            <person name="Dreano S."/>
            <person name="Gloux S."/>
            <person name="Lelaure V."/>
            <person name="Mottier S."/>
            <person name="Galibert F."/>
            <person name="Borkova D."/>
            <person name="Minana B."/>
            <person name="Kafatos F.C."/>
            <person name="Louis C."/>
            <person name="Siden-Kiamos I."/>
            <person name="Bolshakov S."/>
            <person name="Papagiannakis G."/>
            <person name="Spanos L."/>
            <person name="Cox S."/>
            <person name="Madueno E."/>
            <person name="de Pablos B."/>
            <person name="Modolell J."/>
            <person name="Peter A."/>
            <person name="Schoettler P."/>
            <person name="Werner M."/>
            <person name="Mourkioti F."/>
            <person name="Beinert N."/>
            <person name="Dowe G."/>
            <person name="Schaefer U."/>
            <person name="Jaeckle H."/>
            <person name="Bucheton A."/>
            <person name="Callister D.M."/>
            <person name="Campbell L.A."/>
            <person name="Darlamitsou A."/>
            <person name="Henderson N.S."/>
            <person name="McMillan P.J."/>
            <person name="Salles C."/>
            <person name="Tait E.A."/>
            <person name="Valenti P."/>
            <person name="Saunders R.D.C."/>
            <person name="Glover D.M."/>
        </authorList>
    </citation>
    <scope>NUCLEOTIDE SEQUENCE [LARGE SCALE GENOMIC DNA]</scope>
    <source>
        <strain>Oregon-R</strain>
    </source>
</reference>
<reference key="5">
    <citation type="journal article" date="2002" name="Genome Biol.">
        <title>A Drosophila full-length cDNA resource.</title>
        <authorList>
            <person name="Stapleton M."/>
            <person name="Carlson J.W."/>
            <person name="Brokstein P."/>
            <person name="Yu C."/>
            <person name="Champe M."/>
            <person name="George R.A."/>
            <person name="Guarin H."/>
            <person name="Kronmiller B."/>
            <person name="Pacleb J.M."/>
            <person name="Park S."/>
            <person name="Wan K.H."/>
            <person name="Rubin G.M."/>
            <person name="Celniker S.E."/>
        </authorList>
    </citation>
    <scope>NUCLEOTIDE SEQUENCE [LARGE SCALE MRNA] (ISOFORM A)</scope>
    <source>
        <strain>Berkeley</strain>
        <tissue>Embryo</tissue>
    </source>
</reference>
<reference key="6">
    <citation type="journal article" date="1987" name="EMBO J.">
        <title>Evidence that a regulatory gene autoregulates splicing of its transcript.</title>
        <authorList>
            <person name="Zachar Z."/>
            <person name="Chou T.-B."/>
            <person name="Bingham P.M."/>
        </authorList>
    </citation>
    <scope>FUNCTION</scope>
    <scope>ALTERNATIVE SPLICING</scope>
</reference>
<reference key="7">
    <citation type="journal article" date="1991" name="Cell">
        <title>Arginine/serine-rich domains of the su(wa) and tra RNA processing regulators target proteins to a subnuclear compartment implicated in splicing.</title>
        <authorList>
            <person name="Li H."/>
            <person name="Bingham P.M."/>
        </authorList>
    </citation>
    <scope>CHARACTERIZATION OF RS DOMAIN</scope>
</reference>
<reference key="8">
    <citation type="journal article" date="2008" name="J. Proteome Res.">
        <title>Phosphoproteome analysis of Drosophila melanogaster embryos.</title>
        <authorList>
            <person name="Zhai B."/>
            <person name="Villen J."/>
            <person name="Beausoleil S.A."/>
            <person name="Mintseris J."/>
            <person name="Gygi S.P."/>
        </authorList>
    </citation>
    <scope>PHOSPHORYLATION [LARGE SCALE ANALYSIS] AT SER-438; SER-447; SER-448; SER-450; SER-649; SER-912; SER-914 AND SER-916</scope>
    <scope>IDENTIFICATION BY MASS SPECTROMETRY</scope>
    <source>
        <tissue>Embryo</tissue>
    </source>
</reference>
<proteinExistence type="evidence at protein level"/>
<accession>P12297</accession>
<accession>Q24543</accession>
<accession>Q7KW21</accession>
<accession>Q8MSS2</accession>
<accession>Q9I7D2</accession>
<accession>Q9TVZ2</accession>
<sequence>MLPYNVRNAGGGSVGGILRRTGQGSGTGSTILGNGNSPGALGAGKVSSSLENHRQPPLELLVFGYACKIFRDDEKAREMDHGKQLIPWMGDVNLKIDRYDVRGALCELAPHEAPPGGYGNRLEYLSAEEQRAEQLCEEERYLFLYNNEEELRLRQEEDLKRLQQETSGGCFSQVGFQYDGQSAASTSIGGSSTATSQLSPNSEESELPFVLPYTLMMAPPLDMQLPETMKQHAIIEKTARFIATQGAQMEILIKAKQANNTQFDFLTQGGHLQPYYRHLLAAIKAAKFPPAPQTPLDQQNTDKEAPSADDHSEEVAGGRRNPNQVVITVPTIKYKPSANCAYTQLISKIKGVPLQAVLQEDESSNPGNSQHSGGTASPALSCRSEGHNSQGGEFTPVLLQYNGSTFTHEEESSNREQQDDNDVNGGEPPQVELLKNTSALALAQNYSSESEEEEDQVQPEKEEEKKPEPVLTFPVPKDSLRHIIDKTATYVIKNGRQFEETLRTKSVDRFSFLLPANEYYPYYLYKVTGDVDAASKEEKTRKAAAVAAALMSKKGLSFGGAAAAVSGSNLDKAPVSFSIRARDDQCPLQHTLPQEASDEETSSNAAGVEHVRPGMPDSVQRAIKQVETQLLARTAGQKGNITASPSCSSPQKEQRQAEERVKDKLAQIAREKLNGMISREKQLQLERKRKALAFLNQIKGEGAIVGSAVPVVGPNPPESAAGAATADSGDESGDSVRSIPITYFGPDDDDEVGEQRPEMRLIGSTQKDEEDDDEEDGGDLEKYNLLNDDSTNTFTSKPVLPPTAAPPPAAVLLSDDDDVQLVATTSTRSSSSRHLKTHRRSRSRSKNVRSSDSSPSSRESSRRRRQKSSRLSREPSSNPPRKSQHSSTQRKKTPKKRRRSKSRSRSKSIRRSRSISILRNNRRSRSRSPSCRNAEQRRQQDRRRTPTKKSHKRHKRRRRSSSP</sequence>
<evidence type="ECO:0000256" key="1">
    <source>
        <dbReference type="SAM" id="MobiDB-lite"/>
    </source>
</evidence>
<evidence type="ECO:0000269" key="2">
    <source>
    </source>
</evidence>
<evidence type="ECO:0000269" key="3">
    <source>
    </source>
</evidence>
<evidence type="ECO:0000305" key="4"/>
<protein>
    <recommendedName>
        <fullName>Protein suppressor of white apricot</fullName>
    </recommendedName>
</protein>
<comment type="function">
    <text evidence="3">Regulator of pre-mRNA splicing (and, possibly, of other RNA processing events). Regulates its own expression at the level of RNA processing.</text>
</comment>
<comment type="interaction">
    <interactant intactId="EBI-142568">
        <id>P12297</id>
    </interactant>
    <interactant intactId="EBI-163082">
        <id>Q9VKV8</id>
        <label>Bug22</label>
    </interactant>
    <organismsDiffer>false</organismsDiffer>
    <experiments>3</experiments>
</comment>
<comment type="subcellular location">
    <subcellularLocation>
        <location>Nucleus speckle</location>
    </subcellularLocation>
    <text>Speckled subnuclear compartment.</text>
</comment>
<comment type="alternative products">
    <event type="alternative splicing"/>
    <isoform>
        <id>P12297-2</id>
        <name>A</name>
        <sequence type="displayed"/>
    </isoform>
    <isoform>
        <id>P12297-3</id>
        <name>B</name>
        <name>C</name>
        <sequence type="described" ref="VSP_004436"/>
    </isoform>
</comment>
<comment type="developmental stage">
    <text>Three mRNAs are produced during development. The smallest of these (3.5 kb RNA) is the majority species during precellular blastoderm development after which its levels drop rapidly, but persists as a minority species throughout the rest of the life of the organism. The larger two transcripts (4.4 and 5.2 kb RNAs) first appear around cellular blastoderm and levels increase substantially during next few hours and are the preponderant RNA species throughout the remainder of the life of the organism.</text>
</comment>
<comment type="domain">
    <text>RS domain directs localization of proteins to the speckled subnuclear compartment and the purpose of this localization is to allow colocalization and co-concentration of components of the splicing and splicing regulatory machinery to permit relatively high rates and/or efficiencies of reaction and interaction.</text>
</comment>
<comment type="sequence caution" evidence="4">
    <conflict type="erroneous gene model prediction">
        <sequence resource="EMBL-CDS" id="AAS65241"/>
    </conflict>
</comment>
<comment type="sequence caution" evidence="4">
    <conflict type="erroneous gene model prediction">
        <sequence resource="EMBL-CDS" id="CAA29812"/>
    </conflict>
</comment>
<comment type="sequence caution" evidence="4">
    <conflict type="erroneous gene model prediction">
        <sequence resource="EMBL-CDS" id="CAA29813"/>
    </conflict>
</comment>
<comment type="sequence caution" evidence="4">
    <conflict type="erroneous gene model prediction">
        <sequence resource="EMBL-CDS" id="CAB65879"/>
    </conflict>
</comment>
<comment type="sequence caution" evidence="4">
    <conflict type="erroneous gene model prediction">
        <sequence resource="EMBL-CDS" id="CAB65880"/>
    </conflict>
</comment>
<dbReference type="EMBL" id="X06589">
    <property type="protein sequence ID" value="CAA29812.1"/>
    <property type="status" value="ALT_SEQ"/>
    <property type="molecule type" value="Genomic_DNA"/>
</dbReference>
<dbReference type="EMBL" id="X06589">
    <property type="protein sequence ID" value="CAA29813.1"/>
    <property type="status" value="ALT_SEQ"/>
    <property type="molecule type" value="Genomic_DNA"/>
</dbReference>
<dbReference type="EMBL" id="AE014298">
    <property type="protein sequence ID" value="AAG22382.2"/>
    <property type="molecule type" value="Genomic_DNA"/>
</dbReference>
<dbReference type="EMBL" id="AE014298">
    <property type="protein sequence ID" value="AAS65241.1"/>
    <property type="status" value="ALT_SEQ"/>
    <property type="molecule type" value="Genomic_DNA"/>
</dbReference>
<dbReference type="EMBL" id="AL109630">
    <property type="protein sequence ID" value="CAB65879.1"/>
    <property type="status" value="ALT_SEQ"/>
    <property type="molecule type" value="Genomic_DNA"/>
</dbReference>
<dbReference type="EMBL" id="AL132651">
    <property type="protein sequence ID" value="CAB65879.1"/>
    <property type="status" value="JOINED"/>
    <property type="molecule type" value="Genomic_DNA"/>
</dbReference>
<dbReference type="EMBL" id="AL132651">
    <property type="protein sequence ID" value="CAB65880.1"/>
    <property type="status" value="ALT_SEQ"/>
    <property type="molecule type" value="Genomic_DNA"/>
</dbReference>
<dbReference type="EMBL" id="AL109630">
    <property type="protein sequence ID" value="CAB65880.1"/>
    <property type="status" value="JOINED"/>
    <property type="molecule type" value="Genomic_DNA"/>
</dbReference>
<dbReference type="EMBL" id="AY118635">
    <property type="protein sequence ID" value="AAM50004.1"/>
    <property type="molecule type" value="mRNA"/>
</dbReference>
<dbReference type="PIR" id="S06028">
    <property type="entry name" value="S06028"/>
</dbReference>
<dbReference type="RefSeq" id="NP_001188520.1">
    <molecule id="P12297-3"/>
    <property type="nucleotide sequence ID" value="NM_001201591.3"/>
</dbReference>
<dbReference type="RefSeq" id="NP_476756.2">
    <molecule id="P12297-2"/>
    <property type="nucleotide sequence ID" value="NM_057408.6"/>
</dbReference>
<dbReference type="RefSeq" id="NP_996323.1">
    <property type="nucleotide sequence ID" value="NM_206600.3"/>
</dbReference>
<dbReference type="RefSeq" id="NP_996324.1">
    <property type="nucleotide sequence ID" value="NM_206601.3"/>
</dbReference>
<dbReference type="SMR" id="P12297"/>
<dbReference type="BioGRID" id="57618">
    <property type="interactions" value="12"/>
</dbReference>
<dbReference type="FunCoup" id="P12297">
    <property type="interactions" value="2209"/>
</dbReference>
<dbReference type="IntAct" id="P12297">
    <property type="interactions" value="14"/>
</dbReference>
<dbReference type="STRING" id="7227.FBpp0070171"/>
<dbReference type="iPTMnet" id="P12297"/>
<dbReference type="PaxDb" id="7227-FBpp0070171"/>
<dbReference type="DNASU" id="31054"/>
<dbReference type="EnsemblMetazoa" id="FBtr0070176">
    <molecule id="P12297-2"/>
    <property type="protein sequence ID" value="FBpp0070171"/>
    <property type="gene ID" value="FBgn0003638"/>
</dbReference>
<dbReference type="EnsemblMetazoa" id="FBtr0302884">
    <molecule id="P12297-3"/>
    <property type="protein sequence ID" value="FBpp0292012"/>
    <property type="gene ID" value="FBgn0003638"/>
</dbReference>
<dbReference type="GeneID" id="31054"/>
<dbReference type="KEGG" id="dme:Dmel_CG3019"/>
<dbReference type="AGR" id="FB:FBgn0003638"/>
<dbReference type="CTD" id="31054"/>
<dbReference type="FlyBase" id="FBgn0003638">
    <property type="gene designation" value="su(w[a])"/>
</dbReference>
<dbReference type="VEuPathDB" id="VectorBase:FBgn0003638"/>
<dbReference type="eggNOG" id="KOG1847">
    <property type="taxonomic scope" value="Eukaryota"/>
</dbReference>
<dbReference type="GeneTree" id="ENSGT00940000153892"/>
<dbReference type="HOGENOM" id="CLU_012240_0_0_1"/>
<dbReference type="InParanoid" id="P12297"/>
<dbReference type="OMA" id="SDGAYHE"/>
<dbReference type="OrthoDB" id="5836667at2759"/>
<dbReference type="PhylomeDB" id="P12297"/>
<dbReference type="SignaLink" id="P12297"/>
<dbReference type="BioGRID-ORCS" id="31054">
    <property type="hits" value="1 hit in 1 CRISPR screen"/>
</dbReference>
<dbReference type="ChiTaRS" id="su(w[a])">
    <property type="organism name" value="fly"/>
</dbReference>
<dbReference type="GenomeRNAi" id="31054"/>
<dbReference type="PRO" id="PR:P12297"/>
<dbReference type="Proteomes" id="UP000000803">
    <property type="component" value="Chromosome X"/>
</dbReference>
<dbReference type="Bgee" id="FBgn0003638">
    <property type="expression patterns" value="Expressed in male accessory gland main cell (Drosophila) in male reproductive gland and 269 other cell types or tissues"/>
</dbReference>
<dbReference type="ExpressionAtlas" id="P12297">
    <property type="expression patterns" value="baseline and differential"/>
</dbReference>
<dbReference type="GO" id="GO:0016607">
    <property type="term" value="C:nuclear speck"/>
    <property type="evidence" value="ECO:0007669"/>
    <property type="project" value="UniProtKB-SubCell"/>
</dbReference>
<dbReference type="GO" id="GO:0003723">
    <property type="term" value="F:RNA binding"/>
    <property type="evidence" value="ECO:0007669"/>
    <property type="project" value="UniProtKB-KW"/>
</dbReference>
<dbReference type="GO" id="GO:0000395">
    <property type="term" value="P:mRNA 5'-splice site recognition"/>
    <property type="evidence" value="ECO:0000318"/>
    <property type="project" value="GO_Central"/>
</dbReference>
<dbReference type="Gene3D" id="1.10.10.790">
    <property type="entry name" value="Surp module"/>
    <property type="match status" value="2"/>
</dbReference>
<dbReference type="InterPro" id="IPR000061">
    <property type="entry name" value="Surp"/>
</dbReference>
<dbReference type="InterPro" id="IPR040397">
    <property type="entry name" value="SWAP"/>
</dbReference>
<dbReference type="InterPro" id="IPR035967">
    <property type="entry name" value="SWAP/Surp_sf"/>
</dbReference>
<dbReference type="InterPro" id="IPR019147">
    <property type="entry name" value="SWAP_N_domain"/>
</dbReference>
<dbReference type="PANTHER" id="PTHR13161">
    <property type="entry name" value="SPLICING FACTOR SUPPRESSOR OF WHITE APRICOT"/>
    <property type="match status" value="1"/>
</dbReference>
<dbReference type="PANTHER" id="PTHR13161:SF15">
    <property type="entry name" value="SPLICING FACTOR, SUPPRESSOR OF WHITE-APRICOT HOMOLOG"/>
    <property type="match status" value="1"/>
</dbReference>
<dbReference type="Pfam" id="PF09750">
    <property type="entry name" value="DRY_EERY"/>
    <property type="match status" value="1"/>
</dbReference>
<dbReference type="Pfam" id="PF01805">
    <property type="entry name" value="Surp"/>
    <property type="match status" value="2"/>
</dbReference>
<dbReference type="SMART" id="SM01141">
    <property type="entry name" value="DRY_EERY"/>
    <property type="match status" value="1"/>
</dbReference>
<dbReference type="SMART" id="SM00648">
    <property type="entry name" value="SWAP"/>
    <property type="match status" value="2"/>
</dbReference>
<dbReference type="SUPFAM" id="SSF109905">
    <property type="entry name" value="Surp module (SWAP domain)"/>
    <property type="match status" value="2"/>
</dbReference>
<dbReference type="PROSITE" id="PS50128">
    <property type="entry name" value="SURP"/>
    <property type="match status" value="2"/>
</dbReference>
<keyword id="KW-0025">Alternative splicing</keyword>
<keyword id="KW-0507">mRNA processing</keyword>
<keyword id="KW-0508">mRNA splicing</keyword>
<keyword id="KW-0539">Nucleus</keyword>
<keyword id="KW-0597">Phosphoprotein</keyword>
<keyword id="KW-1185">Reference proteome</keyword>
<keyword id="KW-0677">Repeat</keyword>
<keyword id="KW-0694">RNA-binding</keyword>
<keyword id="KW-0804">Transcription</keyword>
<keyword id="KW-0805">Transcription regulation</keyword>
<feature type="chain" id="PRO_0000072324" description="Protein suppressor of white apricot">
    <location>
        <begin position="1"/>
        <end position="963"/>
    </location>
</feature>
<feature type="repeat" description="SURP motif 1">
    <location>
        <begin position="234"/>
        <end position="276"/>
    </location>
</feature>
<feature type="repeat" description="SURP motif 2">
    <location>
        <begin position="483"/>
        <end position="523"/>
    </location>
</feature>
<feature type="region of interest" description="Disordered" evidence="1">
    <location>
        <begin position="290"/>
        <end position="322"/>
    </location>
</feature>
<feature type="region of interest" description="Disordered" evidence="1">
    <location>
        <begin position="360"/>
        <end position="430"/>
    </location>
</feature>
<feature type="region of interest" description="Disordered" evidence="1">
    <location>
        <begin position="445"/>
        <end position="470"/>
    </location>
</feature>
<feature type="region of interest" description="Disordered" evidence="1">
    <location>
        <begin position="593"/>
        <end position="613"/>
    </location>
</feature>
<feature type="region of interest" description="Disordered" evidence="1">
    <location>
        <begin position="634"/>
        <end position="662"/>
    </location>
</feature>
<feature type="region of interest" description="Disordered" evidence="1">
    <location>
        <begin position="716"/>
        <end position="963"/>
    </location>
</feature>
<feature type="compositionally biased region" description="Basic and acidic residues" evidence="1">
    <location>
        <begin position="300"/>
        <end position="317"/>
    </location>
</feature>
<feature type="compositionally biased region" description="Polar residues" evidence="1">
    <location>
        <begin position="364"/>
        <end position="375"/>
    </location>
</feature>
<feature type="compositionally biased region" description="Basic and acidic residues" evidence="1">
    <location>
        <begin position="407"/>
        <end position="418"/>
    </location>
</feature>
<feature type="compositionally biased region" description="Basic and acidic residues" evidence="1">
    <location>
        <begin position="458"/>
        <end position="468"/>
    </location>
</feature>
<feature type="compositionally biased region" description="Polar residues" evidence="1">
    <location>
        <begin position="637"/>
        <end position="651"/>
    </location>
</feature>
<feature type="compositionally biased region" description="Basic and acidic residues" evidence="1">
    <location>
        <begin position="652"/>
        <end position="662"/>
    </location>
</feature>
<feature type="compositionally biased region" description="Low complexity" evidence="1">
    <location>
        <begin position="718"/>
        <end position="727"/>
    </location>
</feature>
<feature type="compositionally biased region" description="Acidic residues" evidence="1">
    <location>
        <begin position="768"/>
        <end position="778"/>
    </location>
</feature>
<feature type="compositionally biased region" description="Polar residues" evidence="1">
    <location>
        <begin position="787"/>
        <end position="796"/>
    </location>
</feature>
<feature type="compositionally biased region" description="Pro residues" evidence="1">
    <location>
        <begin position="799"/>
        <end position="809"/>
    </location>
</feature>
<feature type="compositionally biased region" description="Low complexity" evidence="1">
    <location>
        <begin position="820"/>
        <end position="830"/>
    </location>
</feature>
<feature type="compositionally biased region" description="Basic residues" evidence="1">
    <location>
        <begin position="831"/>
        <end position="847"/>
    </location>
</feature>
<feature type="compositionally biased region" description="Low complexity" evidence="1">
    <location>
        <begin position="848"/>
        <end position="858"/>
    </location>
</feature>
<feature type="compositionally biased region" description="Basic residues" evidence="1">
    <location>
        <begin position="861"/>
        <end position="870"/>
    </location>
</feature>
<feature type="compositionally biased region" description="Basic residues" evidence="1">
    <location>
        <begin position="882"/>
        <end position="913"/>
    </location>
</feature>
<feature type="compositionally biased region" description="Basic and acidic residues" evidence="1">
    <location>
        <begin position="934"/>
        <end position="944"/>
    </location>
</feature>
<feature type="compositionally biased region" description="Basic residues" evidence="1">
    <location>
        <begin position="945"/>
        <end position="963"/>
    </location>
</feature>
<feature type="modified residue" description="Phosphoserine" evidence="2">
    <location>
        <position position="438"/>
    </location>
</feature>
<feature type="modified residue" description="Phosphoserine" evidence="2">
    <location>
        <position position="447"/>
    </location>
</feature>
<feature type="modified residue" description="Phosphoserine" evidence="2">
    <location>
        <position position="448"/>
    </location>
</feature>
<feature type="modified residue" description="Phosphoserine" evidence="2">
    <location>
        <position position="450"/>
    </location>
</feature>
<feature type="modified residue" description="Phosphoserine" evidence="2">
    <location>
        <position position="649"/>
    </location>
</feature>
<feature type="modified residue" description="Phosphoserine" evidence="2">
    <location>
        <position position="912"/>
    </location>
</feature>
<feature type="modified residue" description="Phosphoserine" evidence="2">
    <location>
        <position position="914"/>
    </location>
</feature>
<feature type="modified residue" description="Phosphoserine" evidence="2">
    <location>
        <position position="916"/>
    </location>
</feature>
<feature type="splice variant" id="VSP_004436" description="In isoform B." evidence="4">
    <location>
        <begin position="1"/>
        <end position="215"/>
    </location>
</feature>
<feature type="sequence conflict" description="In Ref. 5; CAA29812/CAA29813." evidence="4" ref="5">
    <original>S</original>
    <variation>SS</variation>
    <location>
        <position position="49"/>
    </location>
</feature>
<name>SUWA_DROME</name>
<gene>
    <name type="primary">su(w[a])</name>
    <name type="synonym">su(wa)</name>
    <name type="ORF">CG3019</name>
</gene>